<accession>Q6LLL4</accession>
<name>GPPA_PHOPR</name>
<evidence type="ECO:0000255" key="1">
    <source>
        <dbReference type="HAMAP-Rule" id="MF_01550"/>
    </source>
</evidence>
<sequence length="497" mass="55419">MERNPISPLYAAIDLGSNSFHMWIVREVAGSVQTLAKIKRKVRLAAGLNSQNELSEEAMQRGWDCLSLFAERLQDIPAERVRIIGTAALRTAVNADIFLSKAKDILGSKVDVIPGEEEARIIYQGVAHTSGGSDKRLVVDIGGASTEVIIGEGFDASALTSLKIGCVTWLERYFKDRYLTAENFDAAIDAAKNAIEPIVEQYTQLGWETCVGASGTVQALQEIMLAQGMDEIITLSKLKRMQRQAMQYERLEDLDIEGLTLERALVFPSGLSILIAVFESLNIESMTLAGGALREGMVYEMMSKMRHHDVRERTLTSVQERFQLDTSHASAVTNTAMALLSRCDEEWQLEPQAQYLLHASVCLHEIGTSIEFKKSGEHAAYLINHIDLPGFTRAQKHLIAELLRRFREQLTSLPEQHALSAQNAARILRLLRLAVILCHRRDHNQQPPFSLSVAENKLVLTLPAAWLLANPLSHVELQQEATRQTDMGWPLVLEESE</sequence>
<proteinExistence type="inferred from homology"/>
<gene>
    <name evidence="1" type="primary">gppA</name>
    <name type="ordered locus">PBPRA3543</name>
</gene>
<comment type="function">
    <text evidence="1">Catalyzes the conversion of pppGpp to ppGpp. Guanosine pentaphosphate (pppGpp) is a cytoplasmic signaling molecule which together with ppGpp controls the 'stringent response', an adaptive process that allows bacteria to respond to amino acid starvation, resulting in the coordinated regulation of numerous cellular activities.</text>
</comment>
<comment type="catalytic activity">
    <reaction evidence="1">
        <text>guanosine 3'-diphosphate 5'-triphosphate + H2O = guanosine 3',5'-bis(diphosphate) + phosphate + H(+)</text>
        <dbReference type="Rhea" id="RHEA:13073"/>
        <dbReference type="ChEBI" id="CHEBI:15377"/>
        <dbReference type="ChEBI" id="CHEBI:15378"/>
        <dbReference type="ChEBI" id="CHEBI:43474"/>
        <dbReference type="ChEBI" id="CHEBI:77828"/>
        <dbReference type="ChEBI" id="CHEBI:142410"/>
        <dbReference type="EC" id="3.6.1.40"/>
    </reaction>
</comment>
<comment type="pathway">
    <text evidence="1">Purine metabolism; ppGpp biosynthesis; ppGpp from GTP: step 2/2.</text>
</comment>
<comment type="similarity">
    <text evidence="1">Belongs to the GppA/Ppx family. GppA subfamily.</text>
</comment>
<protein>
    <recommendedName>
        <fullName evidence="1">Guanosine-5'-triphosphate,3'-diphosphate pyrophosphatase</fullName>
        <ecNumber evidence="1">3.6.1.40</ecNumber>
    </recommendedName>
    <alternativeName>
        <fullName evidence="1">Guanosine pentaphosphate phosphohydrolase</fullName>
    </alternativeName>
    <alternativeName>
        <fullName evidence="1">pppGpp-5'-phosphohydrolase</fullName>
    </alternativeName>
</protein>
<reference key="1">
    <citation type="journal article" date="2005" name="Science">
        <title>Life at depth: Photobacterium profundum genome sequence and expression analysis.</title>
        <authorList>
            <person name="Vezzi A."/>
            <person name="Campanaro S."/>
            <person name="D'Angelo M."/>
            <person name="Simonato F."/>
            <person name="Vitulo N."/>
            <person name="Lauro F.M."/>
            <person name="Cestaro A."/>
            <person name="Malacrida G."/>
            <person name="Simionati B."/>
            <person name="Cannata N."/>
            <person name="Romualdi C."/>
            <person name="Bartlett D.H."/>
            <person name="Valle G."/>
        </authorList>
    </citation>
    <scope>NUCLEOTIDE SEQUENCE [LARGE SCALE GENOMIC DNA]</scope>
    <source>
        <strain>ATCC BAA-1253 / SS9</strain>
    </source>
</reference>
<keyword id="KW-0378">Hydrolase</keyword>
<keyword id="KW-1185">Reference proteome</keyword>
<organism>
    <name type="scientific">Photobacterium profundum (strain SS9)</name>
    <dbReference type="NCBI Taxonomy" id="298386"/>
    <lineage>
        <taxon>Bacteria</taxon>
        <taxon>Pseudomonadati</taxon>
        <taxon>Pseudomonadota</taxon>
        <taxon>Gammaproteobacteria</taxon>
        <taxon>Vibrionales</taxon>
        <taxon>Vibrionaceae</taxon>
        <taxon>Photobacterium</taxon>
    </lineage>
</organism>
<dbReference type="EC" id="3.6.1.40" evidence="1"/>
<dbReference type="EMBL" id="CR378674">
    <property type="protein sequence ID" value="CAG21814.1"/>
    <property type="molecule type" value="Genomic_DNA"/>
</dbReference>
<dbReference type="RefSeq" id="WP_011220054.1">
    <property type="nucleotide sequence ID" value="NC_006370.1"/>
</dbReference>
<dbReference type="SMR" id="Q6LLL4"/>
<dbReference type="STRING" id="298386.PBPRA3543"/>
<dbReference type="KEGG" id="ppr:PBPRA3543"/>
<dbReference type="eggNOG" id="COG0248">
    <property type="taxonomic scope" value="Bacteria"/>
</dbReference>
<dbReference type="HOGENOM" id="CLU_025908_4_0_6"/>
<dbReference type="UniPathway" id="UPA00908">
    <property type="reaction ID" value="UER00885"/>
</dbReference>
<dbReference type="Proteomes" id="UP000000593">
    <property type="component" value="Chromosome 1"/>
</dbReference>
<dbReference type="GO" id="GO:0008894">
    <property type="term" value="F:guanosine-5'-triphosphate,3'-diphosphate diphosphatase activity"/>
    <property type="evidence" value="ECO:0007669"/>
    <property type="project" value="UniProtKB-UniRule"/>
</dbReference>
<dbReference type="GO" id="GO:0015974">
    <property type="term" value="P:guanosine pentaphosphate catabolic process"/>
    <property type="evidence" value="ECO:0007669"/>
    <property type="project" value="InterPro"/>
</dbReference>
<dbReference type="GO" id="GO:0015970">
    <property type="term" value="P:guanosine tetraphosphate biosynthetic process"/>
    <property type="evidence" value="ECO:0007669"/>
    <property type="project" value="UniProtKB-UniRule"/>
</dbReference>
<dbReference type="GO" id="GO:0015949">
    <property type="term" value="P:nucleobase-containing small molecule interconversion"/>
    <property type="evidence" value="ECO:0007669"/>
    <property type="project" value="TreeGrafter"/>
</dbReference>
<dbReference type="FunFam" id="3.30.420.150:FF:000001">
    <property type="entry name" value="Guanosine-5'-triphosphate,3'-diphosphate pyrophosphatase"/>
    <property type="match status" value="1"/>
</dbReference>
<dbReference type="FunFam" id="3.30.420.40:FF:000023">
    <property type="entry name" value="Guanosine-5'-triphosphate,3'-diphosphate pyrophosphatase"/>
    <property type="match status" value="1"/>
</dbReference>
<dbReference type="Gene3D" id="3.30.420.40">
    <property type="match status" value="1"/>
</dbReference>
<dbReference type="Gene3D" id="3.30.420.150">
    <property type="entry name" value="Exopolyphosphatase. Domain 2"/>
    <property type="match status" value="1"/>
</dbReference>
<dbReference type="Gene3D" id="1.10.3210.10">
    <property type="entry name" value="Hypothetical protein af1432"/>
    <property type="match status" value="1"/>
</dbReference>
<dbReference type="HAMAP" id="MF_01550">
    <property type="entry name" value="GppA"/>
    <property type="match status" value="1"/>
</dbReference>
<dbReference type="InterPro" id="IPR043129">
    <property type="entry name" value="ATPase_NBD"/>
</dbReference>
<dbReference type="InterPro" id="IPR050273">
    <property type="entry name" value="GppA/Ppx_hydrolase"/>
</dbReference>
<dbReference type="InterPro" id="IPR023709">
    <property type="entry name" value="Guo-5TP_3DP_PyrP"/>
</dbReference>
<dbReference type="InterPro" id="IPR048950">
    <property type="entry name" value="Ppx_GppA_C"/>
</dbReference>
<dbReference type="InterPro" id="IPR003695">
    <property type="entry name" value="Ppx_GppA_N"/>
</dbReference>
<dbReference type="InterPro" id="IPR030673">
    <property type="entry name" value="PyroPPase_GppA_Ppx"/>
</dbReference>
<dbReference type="NCBIfam" id="NF008260">
    <property type="entry name" value="PRK11031.1"/>
    <property type="match status" value="1"/>
</dbReference>
<dbReference type="PANTHER" id="PTHR30005">
    <property type="entry name" value="EXOPOLYPHOSPHATASE"/>
    <property type="match status" value="1"/>
</dbReference>
<dbReference type="PANTHER" id="PTHR30005:SF0">
    <property type="entry name" value="RETROGRADE REGULATION PROTEIN 2"/>
    <property type="match status" value="1"/>
</dbReference>
<dbReference type="Pfam" id="PF02541">
    <property type="entry name" value="Ppx-GppA"/>
    <property type="match status" value="1"/>
</dbReference>
<dbReference type="Pfam" id="PF21447">
    <property type="entry name" value="Ppx-GppA_III"/>
    <property type="match status" value="1"/>
</dbReference>
<dbReference type="PIRSF" id="PIRSF001267">
    <property type="entry name" value="Pyrophosphatase_GppA_Ppx"/>
    <property type="match status" value="1"/>
</dbReference>
<dbReference type="SUPFAM" id="SSF53067">
    <property type="entry name" value="Actin-like ATPase domain"/>
    <property type="match status" value="2"/>
</dbReference>
<dbReference type="SUPFAM" id="SSF109604">
    <property type="entry name" value="HD-domain/PDEase-like"/>
    <property type="match status" value="1"/>
</dbReference>
<feature type="chain" id="PRO_0000194283" description="Guanosine-5'-triphosphate,3'-diphosphate pyrophosphatase">
    <location>
        <begin position="1"/>
        <end position="497"/>
    </location>
</feature>